<reference evidence="9 11" key="1">
    <citation type="journal article" date="2002" name="Biochim. Biophys. Acta">
        <title>Identification and characterization of UEV3, a human cDNA with similarities to inactive E2 ubiquitin-conjugating enzymes.</title>
        <authorList>
            <person name="Kloor M."/>
            <person name="Bork P."/>
            <person name="Duwe A."/>
            <person name="Klaes R."/>
            <person name="von Knebel Doeberitz M."/>
            <person name="Ridder R."/>
        </authorList>
    </citation>
    <scope>NUCLEOTIDE SEQUENCE [MRNA] (ISOFORM 2)</scope>
    <scope>FUNCTION</scope>
    <scope>TISSUE SPECIFICITY</scope>
    <source>
        <tissue evidence="11">Placenta</tissue>
    </source>
</reference>
<reference key="2">
    <citation type="submission" date="2003-01" db="EMBL/GenBank/DDBJ databases">
        <title>Full-length cDNA libraries and normalization.</title>
        <authorList>
            <person name="Li W.B."/>
            <person name="Gruber C."/>
            <person name="Jessee J."/>
            <person name="Polayes D."/>
        </authorList>
    </citation>
    <scope>NUCLEOTIDE SEQUENCE [LARGE SCALE MRNA] (ISOFORM 1)</scope>
    <source>
        <tissue>Neuroblastoma</tissue>
    </source>
</reference>
<reference evidence="9" key="3">
    <citation type="journal article" date="2004" name="Nat. Genet.">
        <title>Complete sequencing and characterization of 21,243 full-length human cDNAs.</title>
        <authorList>
            <person name="Ota T."/>
            <person name="Suzuki Y."/>
            <person name="Nishikawa T."/>
            <person name="Otsuki T."/>
            <person name="Sugiyama T."/>
            <person name="Irie R."/>
            <person name="Wakamatsu A."/>
            <person name="Hayashi K."/>
            <person name="Sato H."/>
            <person name="Nagai K."/>
            <person name="Kimura K."/>
            <person name="Makita H."/>
            <person name="Sekine M."/>
            <person name="Obayashi M."/>
            <person name="Nishi T."/>
            <person name="Shibahara T."/>
            <person name="Tanaka T."/>
            <person name="Ishii S."/>
            <person name="Yamamoto J."/>
            <person name="Saito K."/>
            <person name="Kawai Y."/>
            <person name="Isono Y."/>
            <person name="Nakamura Y."/>
            <person name="Nagahari K."/>
            <person name="Murakami K."/>
            <person name="Yasuda T."/>
            <person name="Iwayanagi T."/>
            <person name="Wagatsuma M."/>
            <person name="Shiratori A."/>
            <person name="Sudo H."/>
            <person name="Hosoiri T."/>
            <person name="Kaku Y."/>
            <person name="Kodaira H."/>
            <person name="Kondo H."/>
            <person name="Sugawara M."/>
            <person name="Takahashi M."/>
            <person name="Kanda K."/>
            <person name="Yokoi T."/>
            <person name="Furuya T."/>
            <person name="Kikkawa E."/>
            <person name="Omura Y."/>
            <person name="Abe K."/>
            <person name="Kamihara K."/>
            <person name="Katsuta N."/>
            <person name="Sato K."/>
            <person name="Tanikawa M."/>
            <person name="Yamazaki M."/>
            <person name="Ninomiya K."/>
            <person name="Ishibashi T."/>
            <person name="Yamashita H."/>
            <person name="Murakawa K."/>
            <person name="Fujimori K."/>
            <person name="Tanai H."/>
            <person name="Kimata M."/>
            <person name="Watanabe M."/>
            <person name="Hiraoka S."/>
            <person name="Chiba Y."/>
            <person name="Ishida S."/>
            <person name="Ono Y."/>
            <person name="Takiguchi S."/>
            <person name="Watanabe S."/>
            <person name="Yosida M."/>
            <person name="Hotuta T."/>
            <person name="Kusano J."/>
            <person name="Kanehori K."/>
            <person name="Takahashi-Fujii A."/>
            <person name="Hara H."/>
            <person name="Tanase T.-O."/>
            <person name="Nomura Y."/>
            <person name="Togiya S."/>
            <person name="Komai F."/>
            <person name="Hara R."/>
            <person name="Takeuchi K."/>
            <person name="Arita M."/>
            <person name="Imose N."/>
            <person name="Musashino K."/>
            <person name="Yuuki H."/>
            <person name="Oshima A."/>
            <person name="Sasaki N."/>
            <person name="Aotsuka S."/>
            <person name="Yoshikawa Y."/>
            <person name="Matsunawa H."/>
            <person name="Ichihara T."/>
            <person name="Shiohata N."/>
            <person name="Sano S."/>
            <person name="Moriya S."/>
            <person name="Momiyama H."/>
            <person name="Satoh N."/>
            <person name="Takami S."/>
            <person name="Terashima Y."/>
            <person name="Suzuki O."/>
            <person name="Nakagawa S."/>
            <person name="Senoh A."/>
            <person name="Mizoguchi H."/>
            <person name="Goto Y."/>
            <person name="Shimizu F."/>
            <person name="Wakebe H."/>
            <person name="Hishigaki H."/>
            <person name="Watanabe T."/>
            <person name="Sugiyama A."/>
            <person name="Takemoto M."/>
            <person name="Kawakami B."/>
            <person name="Yamazaki M."/>
            <person name="Watanabe K."/>
            <person name="Kumagai A."/>
            <person name="Itakura S."/>
            <person name="Fukuzumi Y."/>
            <person name="Fujimori Y."/>
            <person name="Komiyama M."/>
            <person name="Tashiro H."/>
            <person name="Tanigami A."/>
            <person name="Fujiwara T."/>
            <person name="Ono T."/>
            <person name="Yamada K."/>
            <person name="Fujii Y."/>
            <person name="Ozaki K."/>
            <person name="Hirao M."/>
            <person name="Ohmori Y."/>
            <person name="Kawabata A."/>
            <person name="Hikiji T."/>
            <person name="Kobatake N."/>
            <person name="Inagaki H."/>
            <person name="Ikema Y."/>
            <person name="Okamoto S."/>
            <person name="Okitani R."/>
            <person name="Kawakami T."/>
            <person name="Noguchi S."/>
            <person name="Itoh T."/>
            <person name="Shigeta K."/>
            <person name="Senba T."/>
            <person name="Matsumura K."/>
            <person name="Nakajima Y."/>
            <person name="Mizuno T."/>
            <person name="Morinaga M."/>
            <person name="Sasaki M."/>
            <person name="Togashi T."/>
            <person name="Oyama M."/>
            <person name="Hata H."/>
            <person name="Watanabe M."/>
            <person name="Komatsu T."/>
            <person name="Mizushima-Sugano J."/>
            <person name="Satoh T."/>
            <person name="Shirai Y."/>
            <person name="Takahashi Y."/>
            <person name="Nakagawa K."/>
            <person name="Okumura K."/>
            <person name="Nagase T."/>
            <person name="Nomura N."/>
            <person name="Kikuchi H."/>
            <person name="Masuho Y."/>
            <person name="Yamashita R."/>
            <person name="Nakai K."/>
            <person name="Yada T."/>
            <person name="Nakamura Y."/>
            <person name="Ohara O."/>
            <person name="Isogai T."/>
            <person name="Sugano S."/>
        </authorList>
    </citation>
    <scope>NUCLEOTIDE SEQUENCE [LARGE SCALE MRNA] (ISOFORMS 2; 4 AND 6)</scope>
    <source>
        <tissue evidence="12">Placenta</tissue>
        <tissue>Testis</tissue>
        <tissue>Tongue</tissue>
    </source>
</reference>
<reference evidence="9" key="4">
    <citation type="journal article" date="2006" name="Nature">
        <title>Human chromosome 11 DNA sequence and analysis including novel gene identification.</title>
        <authorList>
            <person name="Taylor T.D."/>
            <person name="Noguchi H."/>
            <person name="Totoki Y."/>
            <person name="Toyoda A."/>
            <person name="Kuroki Y."/>
            <person name="Dewar K."/>
            <person name="Lloyd C."/>
            <person name="Itoh T."/>
            <person name="Takeda T."/>
            <person name="Kim D.-W."/>
            <person name="She X."/>
            <person name="Barlow K.F."/>
            <person name="Bloom T."/>
            <person name="Bruford E."/>
            <person name="Chang J.L."/>
            <person name="Cuomo C.A."/>
            <person name="Eichler E."/>
            <person name="FitzGerald M.G."/>
            <person name="Jaffe D.B."/>
            <person name="LaButti K."/>
            <person name="Nicol R."/>
            <person name="Park H.-S."/>
            <person name="Seaman C."/>
            <person name="Sougnez C."/>
            <person name="Yang X."/>
            <person name="Zimmer A.R."/>
            <person name="Zody M.C."/>
            <person name="Birren B.W."/>
            <person name="Nusbaum C."/>
            <person name="Fujiyama A."/>
            <person name="Hattori M."/>
            <person name="Rogers J."/>
            <person name="Lander E.S."/>
            <person name="Sakaki Y."/>
        </authorList>
    </citation>
    <scope>NUCLEOTIDE SEQUENCE [LARGE SCALE GENOMIC DNA]</scope>
</reference>
<reference key="5">
    <citation type="submission" date="2005-09" db="EMBL/GenBank/DDBJ databases">
        <authorList>
            <person name="Mural R.J."/>
            <person name="Istrail S."/>
            <person name="Sutton G.G."/>
            <person name="Florea L."/>
            <person name="Halpern A.L."/>
            <person name="Mobarry C.M."/>
            <person name="Lippert R."/>
            <person name="Walenz B."/>
            <person name="Shatkay H."/>
            <person name="Dew I."/>
            <person name="Miller J.R."/>
            <person name="Flanigan M.J."/>
            <person name="Edwards N.J."/>
            <person name="Bolanos R."/>
            <person name="Fasulo D."/>
            <person name="Halldorsson B.V."/>
            <person name="Hannenhalli S."/>
            <person name="Turner R."/>
            <person name="Yooseph S."/>
            <person name="Lu F."/>
            <person name="Nusskern D.R."/>
            <person name="Shue B.C."/>
            <person name="Zheng X.H."/>
            <person name="Zhong F."/>
            <person name="Delcher A.L."/>
            <person name="Huson D.H."/>
            <person name="Kravitz S.A."/>
            <person name="Mouchard L."/>
            <person name="Reinert K."/>
            <person name="Remington K.A."/>
            <person name="Clark A.G."/>
            <person name="Waterman M.S."/>
            <person name="Eichler E.E."/>
            <person name="Adams M.D."/>
            <person name="Hunkapiller M.W."/>
            <person name="Myers E.W."/>
            <person name="Venter J.C."/>
        </authorList>
    </citation>
    <scope>NUCLEOTIDE SEQUENCE [LARGE SCALE GENOMIC DNA]</scope>
</reference>
<reference evidence="10" key="6">
    <citation type="journal article" date="2004" name="Genome Res.">
        <title>The status, quality, and expansion of the NIH full-length cDNA project: the Mammalian Gene Collection (MGC).</title>
        <authorList>
            <consortium name="The MGC Project Team"/>
        </authorList>
    </citation>
    <scope>NUCLEOTIDE SEQUENCE [LARGE SCALE MRNA] (ISOFORMS 3; 5 AND 7)</scope>
    <source>
        <tissue>Brain</tissue>
        <tissue>Placenta</tissue>
        <tissue evidence="10">Testis</tissue>
    </source>
</reference>
<reference key="7">
    <citation type="journal article" date="2011" name="BMC Syst. Biol.">
        <title>Initial characterization of the human central proteome.</title>
        <authorList>
            <person name="Burkard T.R."/>
            <person name="Planyavsky M."/>
            <person name="Kaupe I."/>
            <person name="Breitwieser F.P."/>
            <person name="Buerckstuemmer T."/>
            <person name="Bennett K.L."/>
            <person name="Superti-Furga G."/>
            <person name="Colinge J."/>
        </authorList>
    </citation>
    <scope>IDENTIFICATION BY MASS SPECTROMETRY [LARGE SCALE ANALYSIS]</scope>
</reference>
<reference key="8">
    <citation type="journal article" date="2012" name="Proc. Natl. Acad. Sci. U.S.A.">
        <title>N-terminal acetylome analyses and functional insights of the N-terminal acetyltransferase NatB.</title>
        <authorList>
            <person name="Van Damme P."/>
            <person name="Lasa M."/>
            <person name="Polevoda B."/>
            <person name="Gazquez C."/>
            <person name="Elosegui-Artola A."/>
            <person name="Kim D.S."/>
            <person name="De Juan-Pardo E."/>
            <person name="Demeyer K."/>
            <person name="Hole K."/>
            <person name="Larrea E."/>
            <person name="Timmerman E."/>
            <person name="Prieto J."/>
            <person name="Arnesen T."/>
            <person name="Sherman F."/>
            <person name="Gevaert K."/>
            <person name="Aldabe R."/>
        </authorList>
    </citation>
    <scope>IDENTIFICATION BY MASS SPECTROMETRY [LARGE SCALE ANALYSIS]</scope>
</reference>
<reference key="9">
    <citation type="submission" date="2006-10" db="PDB data bank">
        <title>Structural investigation into the L-lactate dehydrogenase domain of human ubiquitin-conjugating enzyme E2-like isoform A.</title>
        <authorList>
            <person name="Avvakumov G.V."/>
            <person name="Walker J.R."/>
            <person name="Xue S."/>
            <person name="Newman E.M."/>
            <person name="Finerty P.J. Jr."/>
            <person name="Butler-Cole C."/>
            <person name="Tempel W."/>
            <person name="Weigelt J."/>
            <person name="Sundstrom M."/>
            <person name="Arrowsmith C.H."/>
            <person name="Edwards A.M."/>
            <person name="Bochkarev A."/>
            <person name="Dhe-Paganon S."/>
        </authorList>
    </citation>
    <scope>X-RAY CRYSTALLOGRAPHY (2.1 ANGSTROMS)</scope>
</reference>
<feature type="chain" id="PRO_0000278651" description="Ubiquitin-conjugating enzyme E2 variant 3">
    <location>
        <begin position="1"/>
        <end position="471"/>
    </location>
</feature>
<feature type="domain" description="UEV" evidence="2">
    <location>
        <begin position="2"/>
        <end position="145"/>
    </location>
</feature>
<feature type="binding site" evidence="1">
    <location>
        <begin position="191"/>
        <end position="219"/>
    </location>
    <ligand>
        <name>NAD(+)</name>
        <dbReference type="ChEBI" id="CHEBI:57540"/>
    </ligand>
</feature>
<feature type="splice variant" id="VSP_023346" description="In isoform 4." evidence="7">
    <location>
        <begin position="1"/>
        <end position="38"/>
    </location>
</feature>
<feature type="splice variant" id="VSP_023347" description="In isoform 3 and isoform 6." evidence="7 8">
    <location>
        <begin position="43"/>
        <end position="64"/>
    </location>
</feature>
<feature type="splice variant" id="VSP_045986" description="In isoform 7." evidence="8">
    <location>
        <begin position="65"/>
        <end position="164"/>
    </location>
</feature>
<feature type="splice variant" id="VSP_023348" description="In isoform 5." evidence="8">
    <original>GIADRLVLLDL</original>
    <variation>VESRSVTQAGV</variation>
    <location>
        <begin position="205"/>
        <end position="215"/>
    </location>
</feature>
<feature type="splice variant" id="VSP_023349" description="In isoform 5." evidence="8">
    <location>
        <begin position="216"/>
        <end position="471"/>
    </location>
</feature>
<feature type="splice variant" id="VSP_045987" description="In isoform 7." evidence="8">
    <location>
        <begin position="239"/>
        <end position="295"/>
    </location>
</feature>
<feature type="splice variant" id="VSP_045988" description="In isoform 7." evidence="8">
    <original>VLTWSGQEEVVSHTSQVQLSNRAMELLRVKGQRSWSVGLSVADMVDSIVNNKKKVHSVSALAKGYYDINSEVFLSLPCILGTNGVSEVIKTTLKEDTVTEKLQSSASSIHSLQQQLK</original>
    <variation>GI</variation>
    <location>
        <begin position="354"/>
        <end position="470"/>
    </location>
</feature>
<feature type="splice variant" id="VSP_023350" description="In isoform 2, isoform 3 and isoform 4." evidence="6 7 8">
    <original>AMEL</original>
    <variation>DIMI</variation>
    <location>
        <begin position="376"/>
        <end position="379"/>
    </location>
</feature>
<feature type="splice variant" id="VSP_023351" description="In isoform 2, isoform 3 and isoform 4." evidence="6 7 8">
    <location>
        <begin position="380"/>
        <end position="471"/>
    </location>
</feature>
<feature type="sequence conflict" description="In Ref. 3; BAG59405." evidence="9" ref="3">
    <original>D</original>
    <variation>G</variation>
    <location>
        <position position="148"/>
    </location>
</feature>
<feature type="sequence conflict" description="In Ref. 3; BAG59405." evidence="9" ref="3">
    <original>V</original>
    <variation>A</variation>
    <location>
        <position position="248"/>
    </location>
</feature>
<feature type="sequence conflict" description="In Ref. 1; AAN32950 and 3; BAA91985." evidence="9" ref="1 3">
    <original>H</original>
    <variation>L</variation>
    <location>
        <position position="366"/>
    </location>
</feature>
<feature type="strand" evidence="13">
    <location>
        <begin position="184"/>
        <end position="188"/>
    </location>
</feature>
<feature type="helix" evidence="13">
    <location>
        <begin position="192"/>
        <end position="204"/>
    </location>
</feature>
<feature type="strand" evidence="13">
    <location>
        <begin position="208"/>
        <end position="213"/>
    </location>
</feature>
<feature type="helix" evidence="14">
    <location>
        <begin position="218"/>
        <end position="220"/>
    </location>
</feature>
<feature type="helix" evidence="13">
    <location>
        <begin position="223"/>
        <end position="229"/>
    </location>
</feature>
<feature type="strand" evidence="13">
    <location>
        <begin position="234"/>
        <end position="238"/>
    </location>
</feature>
<feature type="helix" evidence="13">
    <location>
        <begin position="240"/>
        <end position="243"/>
    </location>
</feature>
<feature type="strand" evidence="13">
    <location>
        <begin position="247"/>
        <end position="251"/>
    </location>
</feature>
<feature type="helix" evidence="13">
    <location>
        <begin position="262"/>
        <end position="283"/>
    </location>
</feature>
<feature type="turn" evidence="13">
    <location>
        <begin position="284"/>
        <end position="286"/>
    </location>
</feature>
<feature type="strand" evidence="13">
    <location>
        <begin position="288"/>
        <end position="291"/>
    </location>
</feature>
<feature type="strand" evidence="13">
    <location>
        <begin position="293"/>
        <end position="295"/>
    </location>
</feature>
<feature type="helix" evidence="13">
    <location>
        <begin position="296"/>
        <end position="307"/>
    </location>
</feature>
<feature type="helix" evidence="13">
    <location>
        <begin position="311"/>
        <end position="313"/>
    </location>
</feature>
<feature type="strand" evidence="13">
    <location>
        <begin position="314"/>
        <end position="316"/>
    </location>
</feature>
<feature type="helix" evidence="13">
    <location>
        <begin position="320"/>
        <end position="332"/>
    </location>
</feature>
<feature type="helix" evidence="13">
    <location>
        <begin position="339"/>
        <end position="342"/>
    </location>
</feature>
<feature type="strand" evidence="13">
    <location>
        <begin position="343"/>
        <end position="348"/>
    </location>
</feature>
<feature type="strand" evidence="13">
    <location>
        <begin position="350"/>
        <end position="352"/>
    </location>
</feature>
<feature type="strand" evidence="13">
    <location>
        <begin position="354"/>
        <end position="358"/>
    </location>
</feature>
<feature type="helix" evidence="13">
    <location>
        <begin position="366"/>
        <end position="377"/>
    </location>
</feature>
<feature type="strand" evidence="13">
    <location>
        <begin position="380"/>
        <end position="382"/>
    </location>
</feature>
<feature type="helix" evidence="13">
    <location>
        <begin position="387"/>
        <end position="402"/>
    </location>
</feature>
<feature type="strand" evidence="13">
    <location>
        <begin position="407"/>
        <end position="414"/>
    </location>
</feature>
<feature type="strand" evidence="13">
    <location>
        <begin position="426"/>
        <end position="434"/>
    </location>
</feature>
<feature type="strand" evidence="13">
    <location>
        <begin position="437"/>
        <end position="441"/>
    </location>
</feature>
<feature type="helix" evidence="13">
    <location>
        <begin position="450"/>
        <end position="468"/>
    </location>
</feature>
<proteinExistence type="evidence at protein level"/>
<evidence type="ECO:0000250" key="1"/>
<evidence type="ECO:0000255" key="2">
    <source>
        <dbReference type="PROSITE-ProRule" id="PRU00652"/>
    </source>
</evidence>
<evidence type="ECO:0000269" key="3">
    <source>
    </source>
</evidence>
<evidence type="ECO:0000269" key="4">
    <source>
    </source>
</evidence>
<evidence type="ECO:0000269" key="5">
    <source>
    </source>
</evidence>
<evidence type="ECO:0000303" key="6">
    <source>
    </source>
</evidence>
<evidence type="ECO:0000303" key="7">
    <source>
    </source>
</evidence>
<evidence type="ECO:0000303" key="8">
    <source>
    </source>
</evidence>
<evidence type="ECO:0000305" key="9"/>
<evidence type="ECO:0000312" key="10">
    <source>
        <dbReference type="EMBL" id="AAH64566.1"/>
    </source>
</evidence>
<evidence type="ECO:0000312" key="11">
    <source>
        <dbReference type="EMBL" id="AAN32950.1"/>
    </source>
</evidence>
<evidence type="ECO:0000312" key="12">
    <source>
        <dbReference type="EMBL" id="BAA91985.1"/>
    </source>
</evidence>
<evidence type="ECO:0007829" key="13">
    <source>
        <dbReference type="PDB" id="2I6T"/>
    </source>
</evidence>
<evidence type="ECO:0007829" key="14">
    <source>
        <dbReference type="PDB" id="3DL2"/>
    </source>
</evidence>
<comment type="function">
    <text evidence="3">Possible negative regulator of polyubiquitination.</text>
</comment>
<comment type="subunit">
    <text>Homodimer.</text>
</comment>
<comment type="interaction">
    <interactant intactId="EBI-2339926">
        <id>Q8IX04</id>
    </interactant>
    <interactant intactId="EBI-10269566">
        <id>Q8NDC4</id>
        <label>MORN4</label>
    </interactant>
    <organismsDiffer>false</organismsDiffer>
    <experiments>2</experiments>
</comment>
<comment type="alternative products">
    <event type="alternative splicing"/>
    <isoform>
        <id>Q8IX04-1</id>
        <name evidence="4">1</name>
        <sequence type="displayed"/>
    </isoform>
    <isoform>
        <id>Q8IX04-2</id>
        <name evidence="3">2</name>
        <sequence type="described" ref="VSP_023350 VSP_023351"/>
    </isoform>
    <isoform>
        <id>Q8IX04-3</id>
        <name evidence="5">3</name>
        <sequence type="described" ref="VSP_023347 VSP_023350 VSP_023351"/>
    </isoform>
    <isoform>
        <id>Q8IX04-4</id>
        <name>4</name>
        <sequence type="described" ref="VSP_023346 VSP_023350 VSP_023351"/>
    </isoform>
    <isoform>
        <id>Q8IX04-5</id>
        <name>5</name>
        <sequence type="described" ref="VSP_023348 VSP_023349"/>
    </isoform>
    <isoform>
        <id>Q8IX04-6</id>
        <name>6</name>
        <sequence type="described" ref="VSP_023347"/>
    </isoform>
    <isoform>
        <id>Q8IX04-7</id>
        <name>7</name>
        <sequence type="described" ref="VSP_045986 VSP_045987 VSP_045988"/>
    </isoform>
</comment>
<comment type="tissue specificity">
    <text evidence="3">Colon, colon carcinoma cell lines, normal cervical epithelium, carcinomas of the uterine cervix and peripheral blood leukocytes.</text>
</comment>
<comment type="similarity">
    <text evidence="9">In the N-terminal section; belongs to the ubiquitin-conjugating enzyme family. UEV subfamily.</text>
</comment>
<comment type="similarity">
    <text evidence="9">In the C-terminal section; belongs to the LDH/MDH superfamily.</text>
</comment>
<sequence length="471" mass="52264">MEFDCEGLRRLLGKYKFRDLTVEELRNVNVFFPHFKYSMDTYVFKDSSQKDLLNFTGTIPVMYQGNTYNIPIRFWILDSHPFAPPICFLKPTANMGILVGKHVDAQGRIYLPYLQNWSHPKSVIVGLIKEMIAKFQEELPMYSLSSSDEARQVDLLAYIAKITEGVSDTNSKSWANHENKTVNKITVVGGGELGIACTLAISAKGIADRLVLLDLSEGTKGATMDLEIFNLPNVEISKDLSASAHSKVVIFTVNSLGSSQSYLDVVQSNVDMFRALVPALGHYSQHSVLLVASQPVEIMTYVTWKLSTFPANRVIGIGCNLDSQRLQYIITNVLKAQTSGKEVWVIGEQGEDKVLTWSGQEEVVSHTSQVQLSNRAMELLRVKGQRSWSVGLSVADMVDSIVNNKKKVHSVSALAKGYYDINSEVFLSLPCILGTNGVSEVIKTTLKEDTVTEKLQSSASSIHSLQQQLKL</sequence>
<accession>Q8IX04</accession>
<accession>B2RB69</accession>
<accession>B4DL43</accession>
<accession>F5H6L6</accession>
<accession>H7BYD6</accession>
<accession>Q6P2F0</accession>
<accession>Q96FF5</accession>
<accession>Q9NUX7</accession>
<gene>
    <name evidence="10" type="primary">UEVLD</name>
    <name evidence="11" type="synonym">UEV3</name>
</gene>
<dbReference type="EMBL" id="AF503350">
    <property type="protein sequence ID" value="AAN32950.1"/>
    <property type="molecule type" value="mRNA"/>
</dbReference>
<dbReference type="EMBL" id="CR616778">
    <property type="status" value="NOT_ANNOTATED_CDS"/>
    <property type="molecule type" value="mRNA"/>
</dbReference>
<dbReference type="EMBL" id="AK001930">
    <property type="protein sequence ID" value="BAA91985.1"/>
    <property type="molecule type" value="mRNA"/>
</dbReference>
<dbReference type="EMBL" id="AK296835">
    <property type="protein sequence ID" value="BAG59405.1"/>
    <property type="molecule type" value="mRNA"/>
</dbReference>
<dbReference type="EMBL" id="AK314521">
    <property type="protein sequence ID" value="BAG37116.1"/>
    <property type="molecule type" value="mRNA"/>
</dbReference>
<dbReference type="EMBL" id="AC027544">
    <property type="status" value="NOT_ANNOTATED_CDS"/>
    <property type="molecule type" value="Genomic_DNA"/>
</dbReference>
<dbReference type="EMBL" id="AC112694">
    <property type="status" value="NOT_ANNOTATED_CDS"/>
    <property type="molecule type" value="Genomic_DNA"/>
</dbReference>
<dbReference type="EMBL" id="CH471064">
    <property type="protein sequence ID" value="EAW68380.1"/>
    <property type="molecule type" value="Genomic_DNA"/>
</dbReference>
<dbReference type="EMBL" id="BC011011">
    <property type="protein sequence ID" value="AAH11011.2"/>
    <property type="molecule type" value="mRNA"/>
</dbReference>
<dbReference type="EMBL" id="BC064566">
    <property type="protein sequence ID" value="AAH64566.1"/>
    <property type="molecule type" value="mRNA"/>
</dbReference>
<dbReference type="EMBL" id="CD109744">
    <property type="status" value="NOT_ANNOTATED_CDS"/>
    <property type="molecule type" value="mRNA"/>
</dbReference>
<dbReference type="CCDS" id="CCDS41624.1">
    <molecule id="Q8IX04-1"/>
</dbReference>
<dbReference type="CCDS" id="CCDS58122.1">
    <molecule id="Q8IX04-4"/>
</dbReference>
<dbReference type="CCDS" id="CCDS58123.1">
    <molecule id="Q8IX04-3"/>
</dbReference>
<dbReference type="CCDS" id="CCDS58124.1">
    <molecule id="Q8IX04-6"/>
</dbReference>
<dbReference type="CCDS" id="CCDS58125.1">
    <molecule id="Q8IX04-7"/>
</dbReference>
<dbReference type="CCDS" id="CCDS73266.1">
    <molecule id="Q8IX04-5"/>
</dbReference>
<dbReference type="CCDS" id="CCDS7843.1">
    <molecule id="Q8IX04-2"/>
</dbReference>
<dbReference type="RefSeq" id="NP_001035787.1">
    <molecule id="Q8IX04-1"/>
    <property type="nucleotide sequence ID" value="NM_001040697.4"/>
</dbReference>
<dbReference type="RefSeq" id="NP_001248311.1">
    <molecule id="Q8IX04-6"/>
    <property type="nucleotide sequence ID" value="NM_001261382.3"/>
</dbReference>
<dbReference type="RefSeq" id="NP_001248312.1">
    <molecule id="Q8IX04-3"/>
    <property type="nucleotide sequence ID" value="NM_001261383.3"/>
</dbReference>
<dbReference type="RefSeq" id="NP_001248314.1">
    <molecule id="Q8IX04-4"/>
    <property type="nucleotide sequence ID" value="NM_001261385.3"/>
</dbReference>
<dbReference type="RefSeq" id="NP_001248315.1">
    <molecule id="Q8IX04-7"/>
    <property type="nucleotide sequence ID" value="NM_001261386.3"/>
</dbReference>
<dbReference type="RefSeq" id="NP_001284700.1">
    <molecule id="Q8IX04-5"/>
    <property type="nucleotide sequence ID" value="NM_001297771.3"/>
</dbReference>
<dbReference type="RefSeq" id="NP_060784.3">
    <molecule id="Q8IX04-2"/>
    <property type="nucleotide sequence ID" value="NM_018314.4"/>
</dbReference>
<dbReference type="PDB" id="2I6T">
    <property type="method" value="X-ray"/>
    <property type="resolution" value="2.10 A"/>
    <property type="chains" value="A/B=171-471"/>
</dbReference>
<dbReference type="PDB" id="3DL2">
    <property type="method" value="X-ray"/>
    <property type="resolution" value="2.10 A"/>
    <property type="chains" value="A/B=171-471"/>
</dbReference>
<dbReference type="PDBsum" id="2I6T"/>
<dbReference type="PDBsum" id="3DL2"/>
<dbReference type="SMR" id="Q8IX04"/>
<dbReference type="BioGRID" id="120580">
    <property type="interactions" value="24"/>
</dbReference>
<dbReference type="FunCoup" id="Q8IX04">
    <property type="interactions" value="407"/>
</dbReference>
<dbReference type="IntAct" id="Q8IX04">
    <property type="interactions" value="18"/>
</dbReference>
<dbReference type="MINT" id="Q8IX04"/>
<dbReference type="STRING" id="9606.ENSP00000379500"/>
<dbReference type="iPTMnet" id="Q8IX04"/>
<dbReference type="PhosphoSitePlus" id="Q8IX04"/>
<dbReference type="BioMuta" id="UEVLD"/>
<dbReference type="DMDM" id="126253820"/>
<dbReference type="jPOST" id="Q8IX04"/>
<dbReference type="MassIVE" id="Q8IX04"/>
<dbReference type="PaxDb" id="9606-ENSP00000379500"/>
<dbReference type="PeptideAtlas" id="Q8IX04"/>
<dbReference type="ProteomicsDB" id="27225"/>
<dbReference type="ProteomicsDB" id="43582"/>
<dbReference type="ProteomicsDB" id="70952">
    <molecule id="Q8IX04-1"/>
</dbReference>
<dbReference type="ProteomicsDB" id="70953">
    <molecule id="Q8IX04-2"/>
</dbReference>
<dbReference type="ProteomicsDB" id="70954">
    <molecule id="Q8IX04-3"/>
</dbReference>
<dbReference type="ProteomicsDB" id="70955">
    <molecule id="Q8IX04-4"/>
</dbReference>
<dbReference type="ProteomicsDB" id="70956">
    <molecule id="Q8IX04-5"/>
</dbReference>
<dbReference type="Pumba" id="Q8IX04"/>
<dbReference type="Antibodypedia" id="25122">
    <property type="antibodies" value="148 antibodies from 21 providers"/>
</dbReference>
<dbReference type="DNASU" id="55293"/>
<dbReference type="Ensembl" id="ENST00000300038.7">
    <molecule id="Q8IX04-5"/>
    <property type="protein sequence ID" value="ENSP00000300038.7"/>
    <property type="gene ID" value="ENSG00000151116.17"/>
</dbReference>
<dbReference type="Ensembl" id="ENST00000320750.10">
    <molecule id="Q8IX04-3"/>
    <property type="protein sequence ID" value="ENSP00000323353.6"/>
    <property type="gene ID" value="ENSG00000151116.17"/>
</dbReference>
<dbReference type="Ensembl" id="ENST00000379387.8">
    <molecule id="Q8IX04-6"/>
    <property type="protein sequence ID" value="ENSP00000368697.4"/>
    <property type="gene ID" value="ENSG00000151116.17"/>
</dbReference>
<dbReference type="Ensembl" id="ENST00000396197.8">
    <molecule id="Q8IX04-1"/>
    <property type="protein sequence ID" value="ENSP00000379500.2"/>
    <property type="gene ID" value="ENSG00000151116.17"/>
</dbReference>
<dbReference type="Ensembl" id="ENST00000535484.5">
    <molecule id="Q8IX04-4"/>
    <property type="protein sequence ID" value="ENSP00000441092.1"/>
    <property type="gene ID" value="ENSG00000151116.17"/>
</dbReference>
<dbReference type="Ensembl" id="ENST00000541984.5">
    <molecule id="Q8IX04-7"/>
    <property type="protein sequence ID" value="ENSP00000437538.1"/>
    <property type="gene ID" value="ENSG00000151116.17"/>
</dbReference>
<dbReference type="Ensembl" id="ENST00000543987.5">
    <molecule id="Q8IX04-2"/>
    <property type="protein sequence ID" value="ENSP00000442974.1"/>
    <property type="gene ID" value="ENSG00000151116.17"/>
</dbReference>
<dbReference type="GeneID" id="55293"/>
<dbReference type="KEGG" id="hsa:55293"/>
<dbReference type="MANE-Select" id="ENST00000396197.8">
    <property type="protein sequence ID" value="ENSP00000379500.2"/>
    <property type="RefSeq nucleotide sequence ID" value="NM_001040697.4"/>
    <property type="RefSeq protein sequence ID" value="NP_001035787.1"/>
</dbReference>
<dbReference type="UCSC" id="uc001mot.5">
    <molecule id="Q8IX04-1"/>
    <property type="organism name" value="human"/>
</dbReference>
<dbReference type="AGR" id="HGNC:30866"/>
<dbReference type="CTD" id="55293"/>
<dbReference type="GeneCards" id="UEVLD"/>
<dbReference type="HGNC" id="HGNC:30866">
    <property type="gene designation" value="UEVLD"/>
</dbReference>
<dbReference type="HPA" id="ENSG00000151116">
    <property type="expression patterns" value="Low tissue specificity"/>
</dbReference>
<dbReference type="MIM" id="610985">
    <property type="type" value="gene"/>
</dbReference>
<dbReference type="neXtProt" id="NX_Q8IX04"/>
<dbReference type="OpenTargets" id="ENSG00000151116"/>
<dbReference type="PharmGKB" id="PA147357188"/>
<dbReference type="VEuPathDB" id="HostDB:ENSG00000151116"/>
<dbReference type="eggNOG" id="KOG1495">
    <property type="taxonomic scope" value="Eukaryota"/>
</dbReference>
<dbReference type="eggNOG" id="KOG2391">
    <property type="taxonomic scope" value="Eukaryota"/>
</dbReference>
<dbReference type="GeneTree" id="ENSGT00940000153903"/>
<dbReference type="HOGENOM" id="CLU_039842_0_1_1"/>
<dbReference type="InParanoid" id="Q8IX04"/>
<dbReference type="OMA" id="CIMGANG"/>
<dbReference type="OrthoDB" id="5405561at2759"/>
<dbReference type="PAN-GO" id="Q8IX04">
    <property type="GO annotations" value="3 GO annotations based on evolutionary models"/>
</dbReference>
<dbReference type="PhylomeDB" id="Q8IX04"/>
<dbReference type="TreeFam" id="TF314963"/>
<dbReference type="PathwayCommons" id="Q8IX04"/>
<dbReference type="SignaLink" id="Q8IX04"/>
<dbReference type="BioGRID-ORCS" id="55293">
    <property type="hits" value="10 hits in 1164 CRISPR screens"/>
</dbReference>
<dbReference type="ChiTaRS" id="UEVLD">
    <property type="organism name" value="human"/>
</dbReference>
<dbReference type="EvolutionaryTrace" id="Q8IX04"/>
<dbReference type="GenomeRNAi" id="55293"/>
<dbReference type="Pharos" id="Q8IX04">
    <property type="development level" value="Tdark"/>
</dbReference>
<dbReference type="PRO" id="PR:Q8IX04"/>
<dbReference type="Proteomes" id="UP000005640">
    <property type="component" value="Chromosome 11"/>
</dbReference>
<dbReference type="RNAct" id="Q8IX04">
    <property type="molecule type" value="protein"/>
</dbReference>
<dbReference type="Bgee" id="ENSG00000151116">
    <property type="expression patterns" value="Expressed in mucosa of sigmoid colon and 192 other cell types or tissues"/>
</dbReference>
<dbReference type="ExpressionAtlas" id="Q8IX04">
    <property type="expression patterns" value="baseline and differential"/>
</dbReference>
<dbReference type="GO" id="GO:0000813">
    <property type="term" value="C:ESCRT I complex"/>
    <property type="evidence" value="ECO:0000318"/>
    <property type="project" value="GO_Central"/>
</dbReference>
<dbReference type="GO" id="GO:0070062">
    <property type="term" value="C:extracellular exosome"/>
    <property type="evidence" value="ECO:0007005"/>
    <property type="project" value="UniProtKB"/>
</dbReference>
<dbReference type="GO" id="GO:0016616">
    <property type="term" value="F:oxidoreductase activity, acting on the CH-OH group of donors, NAD or NADP as acceptor"/>
    <property type="evidence" value="ECO:0007669"/>
    <property type="project" value="InterPro"/>
</dbReference>
<dbReference type="GO" id="GO:0043130">
    <property type="term" value="F:ubiquitin binding"/>
    <property type="evidence" value="ECO:0000318"/>
    <property type="project" value="GO_Central"/>
</dbReference>
<dbReference type="GO" id="GO:0019752">
    <property type="term" value="P:carboxylic acid metabolic process"/>
    <property type="evidence" value="ECO:0007669"/>
    <property type="project" value="InterPro"/>
</dbReference>
<dbReference type="GO" id="GO:0008333">
    <property type="term" value="P:endosome to lysosome transport"/>
    <property type="evidence" value="ECO:0000318"/>
    <property type="project" value="GO_Central"/>
</dbReference>
<dbReference type="GO" id="GO:0036211">
    <property type="term" value="P:protein modification process"/>
    <property type="evidence" value="ECO:0007669"/>
    <property type="project" value="InterPro"/>
</dbReference>
<dbReference type="GO" id="GO:0015031">
    <property type="term" value="P:protein transport"/>
    <property type="evidence" value="ECO:0007669"/>
    <property type="project" value="InterPro"/>
</dbReference>
<dbReference type="CDD" id="cd05293">
    <property type="entry name" value="LDH_1"/>
    <property type="match status" value="1"/>
</dbReference>
<dbReference type="CDD" id="cd11685">
    <property type="entry name" value="UEV_TSG101-like"/>
    <property type="match status" value="1"/>
</dbReference>
<dbReference type="FunFam" id="3.10.110.10:FF:000040">
    <property type="entry name" value="tumor susceptibility gene 101 protein"/>
    <property type="match status" value="1"/>
</dbReference>
<dbReference type="FunFam" id="3.90.110.10:FF:000007">
    <property type="entry name" value="ubiquitin-conjugating enzyme E2 variant 3 isoform X1"/>
    <property type="match status" value="1"/>
</dbReference>
<dbReference type="FunFam" id="3.40.50.720:FF:000270">
    <property type="entry name" value="ubiquitin-conjugating enzyme E2 variant 3 isoform X2"/>
    <property type="match status" value="1"/>
</dbReference>
<dbReference type="Gene3D" id="3.90.110.10">
    <property type="entry name" value="Lactate dehydrogenase/glycoside hydrolase, family 4, C-terminal"/>
    <property type="match status" value="1"/>
</dbReference>
<dbReference type="Gene3D" id="3.40.50.720">
    <property type="entry name" value="NAD(P)-binding Rossmann-like Domain"/>
    <property type="match status" value="1"/>
</dbReference>
<dbReference type="Gene3D" id="3.10.110.10">
    <property type="entry name" value="Ubiquitin Conjugating Enzyme"/>
    <property type="match status" value="1"/>
</dbReference>
<dbReference type="InterPro" id="IPR001557">
    <property type="entry name" value="L-lactate/malate_DH"/>
</dbReference>
<dbReference type="InterPro" id="IPR022383">
    <property type="entry name" value="Lactate/malate_DH_C"/>
</dbReference>
<dbReference type="InterPro" id="IPR001236">
    <property type="entry name" value="Lactate/malate_DH_N"/>
</dbReference>
<dbReference type="InterPro" id="IPR015955">
    <property type="entry name" value="Lactate_DH/Glyco_Ohase_4_C"/>
</dbReference>
<dbReference type="InterPro" id="IPR036291">
    <property type="entry name" value="NAD(P)-bd_dom_sf"/>
</dbReference>
<dbReference type="InterPro" id="IPR016135">
    <property type="entry name" value="UBQ-conjugating_enzyme/RWD"/>
</dbReference>
<dbReference type="InterPro" id="IPR008883">
    <property type="entry name" value="UEV_N"/>
</dbReference>
<dbReference type="PANTHER" id="PTHR43128">
    <property type="entry name" value="L-2-HYDROXYCARBOXYLATE DEHYDROGENASE (NAD(P)(+))"/>
    <property type="match status" value="1"/>
</dbReference>
<dbReference type="PANTHER" id="PTHR43128:SF33">
    <property type="entry name" value="UBIQUITIN-CONJUGATING ENZYME E2 VARIANT 3"/>
    <property type="match status" value="1"/>
</dbReference>
<dbReference type="Pfam" id="PF02866">
    <property type="entry name" value="Ldh_1_C"/>
    <property type="match status" value="1"/>
</dbReference>
<dbReference type="Pfam" id="PF00056">
    <property type="entry name" value="Ldh_1_N"/>
    <property type="match status" value="1"/>
</dbReference>
<dbReference type="Pfam" id="PF05743">
    <property type="entry name" value="UEV"/>
    <property type="match status" value="1"/>
</dbReference>
<dbReference type="PRINTS" id="PR00086">
    <property type="entry name" value="LLDHDRGNASE"/>
</dbReference>
<dbReference type="SUPFAM" id="SSF56327">
    <property type="entry name" value="LDH C-terminal domain-like"/>
    <property type="match status" value="1"/>
</dbReference>
<dbReference type="SUPFAM" id="SSF51735">
    <property type="entry name" value="NAD(P)-binding Rossmann-fold domains"/>
    <property type="match status" value="1"/>
</dbReference>
<dbReference type="SUPFAM" id="SSF54495">
    <property type="entry name" value="UBC-like"/>
    <property type="match status" value="1"/>
</dbReference>
<dbReference type="PROSITE" id="PS51322">
    <property type="entry name" value="UEV"/>
    <property type="match status" value="1"/>
</dbReference>
<keyword id="KW-0002">3D-structure</keyword>
<keyword id="KW-0025">Alternative splicing</keyword>
<keyword id="KW-0520">NAD</keyword>
<keyword id="KW-1267">Proteomics identification</keyword>
<keyword id="KW-1185">Reference proteome</keyword>
<keyword id="KW-0833">Ubl conjugation pathway</keyword>
<organism>
    <name type="scientific">Homo sapiens</name>
    <name type="common">Human</name>
    <dbReference type="NCBI Taxonomy" id="9606"/>
    <lineage>
        <taxon>Eukaryota</taxon>
        <taxon>Metazoa</taxon>
        <taxon>Chordata</taxon>
        <taxon>Craniata</taxon>
        <taxon>Vertebrata</taxon>
        <taxon>Euteleostomi</taxon>
        <taxon>Mammalia</taxon>
        <taxon>Eutheria</taxon>
        <taxon>Euarchontoglires</taxon>
        <taxon>Primates</taxon>
        <taxon>Haplorrhini</taxon>
        <taxon>Catarrhini</taxon>
        <taxon>Hominidae</taxon>
        <taxon>Homo</taxon>
    </lineage>
</organism>
<protein>
    <recommendedName>
        <fullName>Ubiquitin-conjugating enzyme E2 variant 3</fullName>
        <shortName>UEV-3</shortName>
    </recommendedName>
    <alternativeName>
        <fullName>EV and lactate/malate dehydrogenase domain-containing protein</fullName>
    </alternativeName>
</protein>
<name>UEVLD_HUMAN</name>